<keyword id="KW-0004">4Fe-4S</keyword>
<keyword id="KW-0067">ATP-binding</keyword>
<keyword id="KW-0149">Chlorophyll biosynthesis</keyword>
<keyword id="KW-0408">Iron</keyword>
<keyword id="KW-0411">Iron-sulfur</keyword>
<keyword id="KW-0479">Metal-binding</keyword>
<keyword id="KW-0547">Nucleotide-binding</keyword>
<keyword id="KW-0560">Oxidoreductase</keyword>
<keyword id="KW-0602">Photosynthesis</keyword>
<keyword id="KW-1185">Reference proteome</keyword>
<gene>
    <name evidence="1" type="primary">chlN</name>
    <name type="ordered locus">P9211_05471</name>
</gene>
<name>CHLN_PROM4</name>
<evidence type="ECO:0000255" key="1">
    <source>
        <dbReference type="HAMAP-Rule" id="MF_00352"/>
    </source>
</evidence>
<feature type="chain" id="PRO_1000120521" description="Light-independent protochlorophyllide reductase subunit N">
    <location>
        <begin position="1"/>
        <end position="418"/>
    </location>
</feature>
<feature type="binding site" evidence="1">
    <location>
        <position position="17"/>
    </location>
    <ligand>
        <name>[4Fe-4S] cluster</name>
        <dbReference type="ChEBI" id="CHEBI:49883"/>
        <note>ligand shared with heterodimeric partner</note>
    </ligand>
</feature>
<feature type="binding site" evidence="1">
    <location>
        <position position="42"/>
    </location>
    <ligand>
        <name>[4Fe-4S] cluster</name>
        <dbReference type="ChEBI" id="CHEBI:49883"/>
        <note>ligand shared with heterodimeric partner</note>
    </ligand>
</feature>
<feature type="binding site" evidence="1">
    <location>
        <position position="103"/>
    </location>
    <ligand>
        <name>[4Fe-4S] cluster</name>
        <dbReference type="ChEBI" id="CHEBI:49883"/>
        <note>ligand shared with heterodimeric partner</note>
    </ligand>
</feature>
<sequence length="418" mass="46398">MSGASLLKETGPREVFCGLTSIVWLHRRMPDAFFLVVGSRTCAHLIQSAAGVMIFAEPRFGTAILEERDLAGLADAHEELDRVVKNLLTRRPEIRTLFLVGSCPSEVIKIDLARAAERLNSQFNGKVTILNYSGSGIETTFTQGEDGALKAFVPLMPSSDKKQLLLVGTLANAVEDRLITIFKRLGIENVDSFPPRQSTELPSIGPETKVLLTQPYLTDTARVLKDRGAEILPAPFPLGVEGSRLWIEAAAKSFNVDQSLVTSTLEPLILRARKALKPYIEKLTGKKLFLLPESQLEIPLARFLHMECGMELLEIGTPYLNRDMMKPELDLLPDKTRIVEGQHVEKQLDRVRKNQPDLVVCGMGLANPLEAEGFSTKWSIEMVFSPIHGIDQASDLAELFSRPLHRHDLLNTKQLTST</sequence>
<comment type="function">
    <text evidence="1">Component of the dark-operative protochlorophyllide reductase (DPOR) that uses Mg-ATP and reduced ferredoxin to reduce ring D of protochlorophyllide (Pchlide) to form chlorophyllide a (Chlide). This reaction is light-independent. The NB-protein (ChlN-ChlB) is the catalytic component of the complex.</text>
</comment>
<comment type="catalytic activity">
    <reaction evidence="1">
        <text>chlorophyllide a + oxidized 2[4Fe-4S]-[ferredoxin] + 2 ADP + 2 phosphate = protochlorophyllide a + reduced 2[4Fe-4S]-[ferredoxin] + 2 ATP + 2 H2O</text>
        <dbReference type="Rhea" id="RHEA:28202"/>
        <dbReference type="Rhea" id="RHEA-COMP:10002"/>
        <dbReference type="Rhea" id="RHEA-COMP:10004"/>
        <dbReference type="ChEBI" id="CHEBI:15377"/>
        <dbReference type="ChEBI" id="CHEBI:30616"/>
        <dbReference type="ChEBI" id="CHEBI:33722"/>
        <dbReference type="ChEBI" id="CHEBI:33723"/>
        <dbReference type="ChEBI" id="CHEBI:43474"/>
        <dbReference type="ChEBI" id="CHEBI:83348"/>
        <dbReference type="ChEBI" id="CHEBI:83350"/>
        <dbReference type="ChEBI" id="CHEBI:456216"/>
        <dbReference type="EC" id="1.3.7.7"/>
    </reaction>
</comment>
<comment type="cofactor">
    <cofactor evidence="1">
        <name>[4Fe-4S] cluster</name>
        <dbReference type="ChEBI" id="CHEBI:49883"/>
    </cofactor>
    <text evidence="1">Binds 1 [4Fe-4S] cluster per heterodimer. The cluster is bound at the heterodimer interface by residues from both subunits.</text>
</comment>
<comment type="pathway">
    <text evidence="1">Porphyrin-containing compound metabolism; chlorophyll biosynthesis (light-independent).</text>
</comment>
<comment type="subunit">
    <text evidence="1">Protochlorophyllide reductase is composed of three subunits; ChlL, ChlN and ChlB. Forms a heterotetramer of two ChlB and two ChlN subunits.</text>
</comment>
<comment type="similarity">
    <text evidence="1">Belongs to the BchN/ChlN family.</text>
</comment>
<organism>
    <name type="scientific">Prochlorococcus marinus (strain MIT 9211)</name>
    <dbReference type="NCBI Taxonomy" id="93059"/>
    <lineage>
        <taxon>Bacteria</taxon>
        <taxon>Bacillati</taxon>
        <taxon>Cyanobacteriota</taxon>
        <taxon>Cyanophyceae</taxon>
        <taxon>Synechococcales</taxon>
        <taxon>Prochlorococcaceae</taxon>
        <taxon>Prochlorococcus</taxon>
    </lineage>
</organism>
<reference key="1">
    <citation type="journal article" date="2007" name="PLoS Genet.">
        <title>Patterns and implications of gene gain and loss in the evolution of Prochlorococcus.</title>
        <authorList>
            <person name="Kettler G.C."/>
            <person name="Martiny A.C."/>
            <person name="Huang K."/>
            <person name="Zucker J."/>
            <person name="Coleman M.L."/>
            <person name="Rodrigue S."/>
            <person name="Chen F."/>
            <person name="Lapidus A."/>
            <person name="Ferriera S."/>
            <person name="Johnson J."/>
            <person name="Steglich C."/>
            <person name="Church G.M."/>
            <person name="Richardson P."/>
            <person name="Chisholm S.W."/>
        </authorList>
    </citation>
    <scope>NUCLEOTIDE SEQUENCE [LARGE SCALE GENOMIC DNA]</scope>
    <source>
        <strain>MIT 9211</strain>
    </source>
</reference>
<accession>A9BEG8</accession>
<proteinExistence type="inferred from homology"/>
<dbReference type="EC" id="1.3.7.7" evidence="1"/>
<dbReference type="EMBL" id="CP000878">
    <property type="protein sequence ID" value="ABX08478.1"/>
    <property type="molecule type" value="Genomic_DNA"/>
</dbReference>
<dbReference type="RefSeq" id="WP_012195101.1">
    <property type="nucleotide sequence ID" value="NC_009976.1"/>
</dbReference>
<dbReference type="SMR" id="A9BEG8"/>
<dbReference type="STRING" id="93059.P9211_05471"/>
<dbReference type="KEGG" id="pmj:P9211_05471"/>
<dbReference type="eggNOG" id="COG2710">
    <property type="taxonomic scope" value="Bacteria"/>
</dbReference>
<dbReference type="HOGENOM" id="CLU_037170_0_0_3"/>
<dbReference type="OrthoDB" id="5714774at2"/>
<dbReference type="UniPathway" id="UPA00670"/>
<dbReference type="Proteomes" id="UP000000788">
    <property type="component" value="Chromosome"/>
</dbReference>
<dbReference type="GO" id="GO:0051539">
    <property type="term" value="F:4 iron, 4 sulfur cluster binding"/>
    <property type="evidence" value="ECO:0007669"/>
    <property type="project" value="UniProtKB-UniRule"/>
</dbReference>
<dbReference type="GO" id="GO:0005524">
    <property type="term" value="F:ATP binding"/>
    <property type="evidence" value="ECO:0007669"/>
    <property type="project" value="UniProtKB-UniRule"/>
</dbReference>
<dbReference type="GO" id="GO:0046872">
    <property type="term" value="F:metal ion binding"/>
    <property type="evidence" value="ECO:0007669"/>
    <property type="project" value="UniProtKB-KW"/>
</dbReference>
<dbReference type="GO" id="GO:0016730">
    <property type="term" value="F:oxidoreductase activity, acting on iron-sulfur proteins as donors"/>
    <property type="evidence" value="ECO:0007669"/>
    <property type="project" value="InterPro"/>
</dbReference>
<dbReference type="GO" id="GO:0016636">
    <property type="term" value="F:oxidoreductase activity, acting on the CH-CH group of donors, iron-sulfur protein as acceptor"/>
    <property type="evidence" value="ECO:0007669"/>
    <property type="project" value="UniProtKB-UniRule"/>
</dbReference>
<dbReference type="GO" id="GO:0036068">
    <property type="term" value="P:light-independent chlorophyll biosynthetic process"/>
    <property type="evidence" value="ECO:0007669"/>
    <property type="project" value="UniProtKB-UniRule"/>
</dbReference>
<dbReference type="GO" id="GO:0019685">
    <property type="term" value="P:photosynthesis, dark reaction"/>
    <property type="evidence" value="ECO:0007669"/>
    <property type="project" value="InterPro"/>
</dbReference>
<dbReference type="Gene3D" id="3.40.50.1980">
    <property type="entry name" value="Nitrogenase molybdenum iron protein domain"/>
    <property type="match status" value="3"/>
</dbReference>
<dbReference type="HAMAP" id="MF_00352">
    <property type="entry name" value="ChlN_BchN"/>
    <property type="match status" value="1"/>
</dbReference>
<dbReference type="InterPro" id="IPR050293">
    <property type="entry name" value="LIPOR_BchN/ChlN"/>
</dbReference>
<dbReference type="InterPro" id="IPR000510">
    <property type="entry name" value="Nase/OxRdtase_comp1"/>
</dbReference>
<dbReference type="InterPro" id="IPR005970">
    <property type="entry name" value="Protochl_reductN"/>
</dbReference>
<dbReference type="NCBIfam" id="TIGR01279">
    <property type="entry name" value="DPOR_bchN"/>
    <property type="match status" value="1"/>
</dbReference>
<dbReference type="NCBIfam" id="NF002768">
    <property type="entry name" value="PRK02842.1"/>
    <property type="match status" value="1"/>
</dbReference>
<dbReference type="PANTHER" id="PTHR39429">
    <property type="entry name" value="LIGHT-INDEPENDENT PROTOCHLOROPHYLLIDE REDUCTASE SUBUNIT N"/>
    <property type="match status" value="1"/>
</dbReference>
<dbReference type="PANTHER" id="PTHR39429:SF3">
    <property type="entry name" value="LIGHT-INDEPENDENT PROTOCHLOROPHYLLIDE REDUCTASE SUBUNIT N"/>
    <property type="match status" value="1"/>
</dbReference>
<dbReference type="Pfam" id="PF00148">
    <property type="entry name" value="Oxidored_nitro"/>
    <property type="match status" value="1"/>
</dbReference>
<dbReference type="PIRSF" id="PIRSF000162">
    <property type="entry name" value="P_chlorophyll_rd"/>
    <property type="match status" value="1"/>
</dbReference>
<dbReference type="SUPFAM" id="SSF53807">
    <property type="entry name" value="Helical backbone' metal receptor"/>
    <property type="match status" value="1"/>
</dbReference>
<protein>
    <recommendedName>
        <fullName evidence="1">Light-independent protochlorophyllide reductase subunit N</fullName>
        <shortName evidence="1">DPOR subunit N</shortName>
        <shortName evidence="1">LI-POR subunit N</shortName>
        <ecNumber evidence="1">1.3.7.7</ecNumber>
    </recommendedName>
</protein>